<comment type="function">
    <text evidence="1">Catalytic subunit of the ferredoxin-thioredoxin reductase (FTR), which catalyzes the two-electron reduction of thioredoxins by the electrons provided by reduced ferredoxin.</text>
</comment>
<comment type="catalytic activity">
    <reaction>
        <text>[thioredoxin]-disulfide + 2 reduced [2Fe-2S]-[ferredoxin] + 2 H(+) = [thioredoxin]-dithiol + 2 oxidized [2Fe-2S]-[ferredoxin]</text>
        <dbReference type="Rhea" id="RHEA:42336"/>
        <dbReference type="Rhea" id="RHEA-COMP:10000"/>
        <dbReference type="Rhea" id="RHEA-COMP:10001"/>
        <dbReference type="Rhea" id="RHEA-COMP:10698"/>
        <dbReference type="Rhea" id="RHEA-COMP:10700"/>
        <dbReference type="ChEBI" id="CHEBI:15378"/>
        <dbReference type="ChEBI" id="CHEBI:29950"/>
        <dbReference type="ChEBI" id="CHEBI:33737"/>
        <dbReference type="ChEBI" id="CHEBI:33738"/>
        <dbReference type="ChEBI" id="CHEBI:50058"/>
        <dbReference type="EC" id="1.8.7.2"/>
    </reaction>
</comment>
<comment type="cofactor">
    <cofactor evidence="1">
        <name>[4Fe-4S] cluster</name>
        <dbReference type="ChEBI" id="CHEBI:49883"/>
    </cofactor>
    <text evidence="1">Binds 1 [4Fe-4S] cluster.</text>
</comment>
<comment type="subunit">
    <text evidence="1">Heterodimer of subunit A (variable subunit) and subunit B (catalytic subunit). Heterodimeric FTR forms a complex with ferredoxin and thioredoxin (By similarity).</text>
</comment>
<comment type="subcellular location">
    <subcellularLocation>
        <location>Plastid</location>
        <location>Chloroplast</location>
    </subcellularLocation>
</comment>
<comment type="similarity">
    <text evidence="2">Belongs to the ferredoxin thioredoxin reductase beta subunit family.</text>
</comment>
<organism>
    <name type="scientific">Porphyra purpurea</name>
    <name type="common">Red seaweed</name>
    <name type="synonym">Ulva purpurea</name>
    <dbReference type="NCBI Taxonomy" id="2787"/>
    <lineage>
        <taxon>Eukaryota</taxon>
        <taxon>Rhodophyta</taxon>
        <taxon>Bangiophyceae</taxon>
        <taxon>Bangiales</taxon>
        <taxon>Bangiaceae</taxon>
        <taxon>Porphyra</taxon>
    </lineage>
</organism>
<protein>
    <recommendedName>
        <fullName>Ferredoxin-thioredoxin reductase, catalytic chain</fullName>
        <shortName>FTR-C</shortName>
        <ecNumber>1.8.7.2</ecNumber>
    </recommendedName>
    <alternativeName>
        <fullName>Ferredoxin-thioredoxin reductase subunit B</fullName>
        <shortName>FTR-B</shortName>
    </alternativeName>
</protein>
<dbReference type="EC" id="1.8.7.2"/>
<dbReference type="EMBL" id="U38804">
    <property type="protein sequence ID" value="AAC08272.1"/>
    <property type="molecule type" value="Genomic_DNA"/>
</dbReference>
<dbReference type="PIR" id="S73307">
    <property type="entry name" value="S73307"/>
</dbReference>
<dbReference type="RefSeq" id="NP_053996.1">
    <property type="nucleotide sequence ID" value="NC_000925.1"/>
</dbReference>
<dbReference type="SMR" id="P51386"/>
<dbReference type="GeneID" id="810027"/>
<dbReference type="GO" id="GO:0009507">
    <property type="term" value="C:chloroplast"/>
    <property type="evidence" value="ECO:0007669"/>
    <property type="project" value="UniProtKB-SubCell"/>
</dbReference>
<dbReference type="GO" id="GO:0051539">
    <property type="term" value="F:4 iron, 4 sulfur cluster binding"/>
    <property type="evidence" value="ECO:0000250"/>
    <property type="project" value="UniProtKB"/>
</dbReference>
<dbReference type="GO" id="GO:0009055">
    <property type="term" value="F:electron transfer activity"/>
    <property type="evidence" value="ECO:0000250"/>
    <property type="project" value="UniProtKB"/>
</dbReference>
<dbReference type="GO" id="GO:0046872">
    <property type="term" value="F:metal ion binding"/>
    <property type="evidence" value="ECO:0007669"/>
    <property type="project" value="UniProtKB-KW"/>
</dbReference>
<dbReference type="GO" id="GO:0016730">
    <property type="term" value="F:oxidoreductase activity, acting on iron-sulfur proteins as donors"/>
    <property type="evidence" value="ECO:0007669"/>
    <property type="project" value="InterPro"/>
</dbReference>
<dbReference type="FunFam" id="3.90.460.10:FF:000001">
    <property type="entry name" value="Ferredoxin-thioredoxin reductase, catalytic chain"/>
    <property type="match status" value="1"/>
</dbReference>
<dbReference type="Gene3D" id="3.90.460.10">
    <property type="entry name" value="Ferredoxin thioredoxin reductase catalytic beta subunit"/>
    <property type="match status" value="1"/>
</dbReference>
<dbReference type="InterPro" id="IPR004209">
    <property type="entry name" value="FTR_bsu"/>
</dbReference>
<dbReference type="InterPro" id="IPR024707">
    <property type="entry name" value="FTR_bsu_Cyanobacter"/>
</dbReference>
<dbReference type="InterPro" id="IPR036644">
    <property type="entry name" value="FTR_bsu_sf"/>
</dbReference>
<dbReference type="PANTHER" id="PTHR35113">
    <property type="entry name" value="FERREDOXIN-THIOREDOXIN REDUCTASE CATALYTIC CHAIN, CHLOROPLASTIC"/>
    <property type="match status" value="1"/>
</dbReference>
<dbReference type="PANTHER" id="PTHR35113:SF1">
    <property type="entry name" value="FERREDOXIN-THIOREDOXIN REDUCTASE CATALYTIC CHAIN, CHLOROPLASTIC"/>
    <property type="match status" value="1"/>
</dbReference>
<dbReference type="Pfam" id="PF02943">
    <property type="entry name" value="FeThRed_B"/>
    <property type="match status" value="1"/>
</dbReference>
<dbReference type="PIRSF" id="PIRSF000260">
    <property type="entry name" value="FTRc"/>
    <property type="match status" value="1"/>
</dbReference>
<dbReference type="SUPFAM" id="SSF57662">
    <property type="entry name" value="Ferredoxin thioredoxin reductase (FTR), catalytic beta chain"/>
    <property type="match status" value="1"/>
</dbReference>
<accession>P51386</accession>
<gene>
    <name type="primary">ftrB</name>
</gene>
<feature type="chain" id="PRO_0000167673" description="Ferredoxin-thioredoxin reductase, catalytic chain">
    <location>
        <begin position="1"/>
        <end position="118"/>
    </location>
</feature>
<feature type="active site" description="Nucleophile" evidence="1">
    <location>
        <position position="59"/>
    </location>
</feature>
<feature type="binding site" evidence="1">
    <location>
        <position position="57"/>
    </location>
    <ligand>
        <name>[4Fe-4S] cluster</name>
        <dbReference type="ChEBI" id="CHEBI:49883"/>
    </ligand>
</feature>
<feature type="binding site" evidence="1">
    <location>
        <position position="76"/>
    </location>
    <ligand>
        <name>[4Fe-4S] cluster</name>
        <dbReference type="ChEBI" id="CHEBI:49883"/>
    </ligand>
</feature>
<feature type="binding site" evidence="1">
    <location>
        <position position="78"/>
    </location>
    <ligand>
        <name>[4Fe-4S] cluster</name>
        <dbReference type="ChEBI" id="CHEBI:49883"/>
    </ligand>
</feature>
<feature type="binding site" evidence="1">
    <location>
        <position position="87"/>
    </location>
    <ligand>
        <name>[4Fe-4S] cluster</name>
        <dbReference type="ChEBI" id="CHEBI:49883"/>
    </ligand>
</feature>
<feature type="site" description="Increases the nucleophilicity of the active site Cys" evidence="1">
    <location>
        <position position="88"/>
    </location>
</feature>
<feature type="disulfide bond" description="Redox-active" evidence="1">
    <location>
        <begin position="59"/>
        <end position="89"/>
    </location>
</feature>
<reference key="1">
    <citation type="journal article" date="1995" name="Plant Mol. Biol. Rep.">
        <title>Complete nucleotide sequence of the Porphyra purpurea chloroplast genome.</title>
        <authorList>
            <person name="Reith M.E."/>
            <person name="Munholland J."/>
        </authorList>
    </citation>
    <scope>NUCLEOTIDE SEQUENCE [LARGE SCALE GENOMIC DNA]</scope>
    <source>
        <strain>Avonport</strain>
    </source>
</reference>
<geneLocation type="chloroplast"/>
<evidence type="ECO:0000250" key="1"/>
<evidence type="ECO:0000305" key="2"/>
<keyword id="KW-0004">4Fe-4S</keyword>
<keyword id="KW-0150">Chloroplast</keyword>
<keyword id="KW-1015">Disulfide bond</keyword>
<keyword id="KW-0408">Iron</keyword>
<keyword id="KW-0411">Iron-sulfur</keyword>
<keyword id="KW-0479">Metal-binding</keyword>
<keyword id="KW-0560">Oxidoreductase</keyword>
<keyword id="KW-0934">Plastid</keyword>
<keyword id="KW-0676">Redox-active center</keyword>
<sequence length="118" mass="13539">MKKQNLVSFSDNLEAMRKFSETYAKRTGTFFCADNSVTAVVIEGLARHKDKYGAPLCPCRHYEDKKAEISATYWNCPCVPMRERKECHCMLFLTPDNEFTSDLQEIDKTTLLEKIASS</sequence>
<name>FTRC_PORPU</name>
<proteinExistence type="inferred from homology"/>